<sequence length="99" mass="11408">MSGISSKGLEELKNNGWLILEDGKKIKKEFKFKDFKQSIDFLKDIQPSADALDHHPDVCIYYNRVIVELTTHDMGGLTDLDYKLAIKIDELYKMKTSNL</sequence>
<evidence type="ECO:0000255" key="1">
    <source>
        <dbReference type="HAMAP-Rule" id="MF_00434"/>
    </source>
</evidence>
<accession>C3MZU9</accession>
<comment type="catalytic activity">
    <reaction evidence="1">
        <text>(4aS,6R)-4a-hydroxy-L-erythro-5,6,7,8-tetrahydrobiopterin = (6R)-L-erythro-6,7-dihydrobiopterin + H2O</text>
        <dbReference type="Rhea" id="RHEA:11920"/>
        <dbReference type="ChEBI" id="CHEBI:15377"/>
        <dbReference type="ChEBI" id="CHEBI:15642"/>
        <dbReference type="ChEBI" id="CHEBI:43120"/>
        <dbReference type="EC" id="4.2.1.96"/>
    </reaction>
</comment>
<comment type="similarity">
    <text evidence="1">Belongs to the pterin-4-alpha-carbinolamine dehydratase family.</text>
</comment>
<name>PHS_SACI3</name>
<keyword id="KW-0456">Lyase</keyword>
<gene>
    <name type="ordered locus">M1627_0005</name>
</gene>
<feature type="chain" id="PRO_1000206071" description="Putative pterin-4-alpha-carbinolamine dehydratase">
    <location>
        <begin position="1"/>
        <end position="99"/>
    </location>
</feature>
<proteinExistence type="inferred from homology"/>
<reference key="1">
    <citation type="journal article" date="2009" name="Proc. Natl. Acad. Sci. U.S.A.">
        <title>Biogeography of the Sulfolobus islandicus pan-genome.</title>
        <authorList>
            <person name="Reno M.L."/>
            <person name="Held N.L."/>
            <person name="Fields C.J."/>
            <person name="Burke P.V."/>
            <person name="Whitaker R.J."/>
        </authorList>
    </citation>
    <scope>NUCLEOTIDE SEQUENCE [LARGE SCALE GENOMIC DNA]</scope>
    <source>
        <strain>M.16.27</strain>
    </source>
</reference>
<dbReference type="EC" id="4.2.1.96" evidence="1"/>
<dbReference type="EMBL" id="CP001401">
    <property type="protein sequence ID" value="ACP54034.1"/>
    <property type="molecule type" value="Genomic_DNA"/>
</dbReference>
<dbReference type="RefSeq" id="WP_012710184.1">
    <property type="nucleotide sequence ID" value="NC_012632.1"/>
</dbReference>
<dbReference type="SMR" id="C3MZU9"/>
<dbReference type="KEGG" id="sim:M1627_0005"/>
<dbReference type="HOGENOM" id="CLU_081974_4_5_2"/>
<dbReference type="Proteomes" id="UP000002307">
    <property type="component" value="Chromosome"/>
</dbReference>
<dbReference type="GO" id="GO:0008124">
    <property type="term" value="F:4-alpha-hydroxytetrahydrobiopterin dehydratase activity"/>
    <property type="evidence" value="ECO:0007669"/>
    <property type="project" value="UniProtKB-UniRule"/>
</dbReference>
<dbReference type="GO" id="GO:0006729">
    <property type="term" value="P:tetrahydrobiopterin biosynthetic process"/>
    <property type="evidence" value="ECO:0007669"/>
    <property type="project" value="InterPro"/>
</dbReference>
<dbReference type="CDD" id="cd00488">
    <property type="entry name" value="PCD_DCoH"/>
    <property type="match status" value="1"/>
</dbReference>
<dbReference type="Gene3D" id="3.30.1360.20">
    <property type="entry name" value="Transcriptional coactivator/pterin dehydratase"/>
    <property type="match status" value="1"/>
</dbReference>
<dbReference type="HAMAP" id="MF_00434">
    <property type="entry name" value="Pterin_4_alpha"/>
    <property type="match status" value="1"/>
</dbReference>
<dbReference type="InterPro" id="IPR036428">
    <property type="entry name" value="PCD_sf"/>
</dbReference>
<dbReference type="InterPro" id="IPR001533">
    <property type="entry name" value="Pterin_deHydtase"/>
</dbReference>
<dbReference type="NCBIfam" id="NF002017">
    <property type="entry name" value="PRK00823.1-2"/>
    <property type="match status" value="1"/>
</dbReference>
<dbReference type="PANTHER" id="PTHR12599">
    <property type="entry name" value="PTERIN-4-ALPHA-CARBINOLAMINE DEHYDRATASE"/>
    <property type="match status" value="1"/>
</dbReference>
<dbReference type="PANTHER" id="PTHR12599:SF0">
    <property type="entry name" value="PTERIN-4-ALPHA-CARBINOLAMINE DEHYDRATASE"/>
    <property type="match status" value="1"/>
</dbReference>
<dbReference type="Pfam" id="PF01329">
    <property type="entry name" value="Pterin_4a"/>
    <property type="match status" value="1"/>
</dbReference>
<dbReference type="SUPFAM" id="SSF55248">
    <property type="entry name" value="PCD-like"/>
    <property type="match status" value="1"/>
</dbReference>
<organism>
    <name type="scientific">Saccharolobus islandicus (strain M.16.27)</name>
    <name type="common">Sulfolobus islandicus</name>
    <dbReference type="NCBI Taxonomy" id="427318"/>
    <lineage>
        <taxon>Archaea</taxon>
        <taxon>Thermoproteota</taxon>
        <taxon>Thermoprotei</taxon>
        <taxon>Sulfolobales</taxon>
        <taxon>Sulfolobaceae</taxon>
        <taxon>Saccharolobus</taxon>
    </lineage>
</organism>
<protein>
    <recommendedName>
        <fullName evidence="1">Putative pterin-4-alpha-carbinolamine dehydratase</fullName>
        <shortName evidence="1">PHS</shortName>
        <ecNumber evidence="1">4.2.1.96</ecNumber>
    </recommendedName>
    <alternativeName>
        <fullName evidence="1">4-alpha-hydroxy-tetrahydropterin dehydratase</fullName>
    </alternativeName>
    <alternativeName>
        <fullName evidence="1">Pterin carbinolamine dehydratase</fullName>
        <shortName evidence="1">PCD</shortName>
    </alternativeName>
</protein>